<comment type="subcellular location">
    <subcellularLocation>
        <location evidence="1">Cell inner membrane</location>
        <topology evidence="1">Multi-pass membrane protein</topology>
    </subcellularLocation>
</comment>
<comment type="similarity">
    <text evidence="1">Belongs to the universal stress protein B family.</text>
</comment>
<name>USPB_ECO55</name>
<keyword id="KW-0997">Cell inner membrane</keyword>
<keyword id="KW-1003">Cell membrane</keyword>
<keyword id="KW-0472">Membrane</keyword>
<keyword id="KW-1185">Reference proteome</keyword>
<keyword id="KW-0812">Transmembrane</keyword>
<keyword id="KW-1133">Transmembrane helix</keyword>
<feature type="chain" id="PRO_1000149877" description="Universal stress protein B">
    <location>
        <begin position="1"/>
        <end position="111"/>
    </location>
</feature>
<feature type="transmembrane region" description="Helical" evidence="1">
    <location>
        <begin position="1"/>
        <end position="21"/>
    </location>
</feature>
<feature type="transmembrane region" description="Helical" evidence="1">
    <location>
        <begin position="90"/>
        <end position="110"/>
    </location>
</feature>
<accession>B7L5X4</accession>
<protein>
    <recommendedName>
        <fullName evidence="1">Universal stress protein B</fullName>
    </recommendedName>
</protein>
<reference key="1">
    <citation type="journal article" date="2009" name="PLoS Genet.">
        <title>Organised genome dynamics in the Escherichia coli species results in highly diverse adaptive paths.</title>
        <authorList>
            <person name="Touchon M."/>
            <person name="Hoede C."/>
            <person name="Tenaillon O."/>
            <person name="Barbe V."/>
            <person name="Baeriswyl S."/>
            <person name="Bidet P."/>
            <person name="Bingen E."/>
            <person name="Bonacorsi S."/>
            <person name="Bouchier C."/>
            <person name="Bouvet O."/>
            <person name="Calteau A."/>
            <person name="Chiapello H."/>
            <person name="Clermont O."/>
            <person name="Cruveiller S."/>
            <person name="Danchin A."/>
            <person name="Diard M."/>
            <person name="Dossat C."/>
            <person name="Karoui M.E."/>
            <person name="Frapy E."/>
            <person name="Garry L."/>
            <person name="Ghigo J.M."/>
            <person name="Gilles A.M."/>
            <person name="Johnson J."/>
            <person name="Le Bouguenec C."/>
            <person name="Lescat M."/>
            <person name="Mangenot S."/>
            <person name="Martinez-Jehanne V."/>
            <person name="Matic I."/>
            <person name="Nassif X."/>
            <person name="Oztas S."/>
            <person name="Petit M.A."/>
            <person name="Pichon C."/>
            <person name="Rouy Z."/>
            <person name="Ruf C.S."/>
            <person name="Schneider D."/>
            <person name="Tourret J."/>
            <person name="Vacherie B."/>
            <person name="Vallenet D."/>
            <person name="Medigue C."/>
            <person name="Rocha E.P.C."/>
            <person name="Denamur E."/>
        </authorList>
    </citation>
    <scope>NUCLEOTIDE SEQUENCE [LARGE SCALE GENOMIC DNA]</scope>
    <source>
        <strain>55989 / EAEC</strain>
    </source>
</reference>
<sequence length="111" mass="13027">MISTVALFWALCVVCIVNMARYFSSLRALLVVLRNCDPLLYQYVDGGGFFTSHGQPNKQVRLVWYIYAQRYRDHHDDEFIRRCERVRRQFILTSALCGLVVVSLIALMIWH</sequence>
<evidence type="ECO:0000255" key="1">
    <source>
        <dbReference type="HAMAP-Rule" id="MF_01088"/>
    </source>
</evidence>
<proteinExistence type="inferred from homology"/>
<dbReference type="EMBL" id="CU928145">
    <property type="protein sequence ID" value="CAV00371.1"/>
    <property type="molecule type" value="Genomic_DNA"/>
</dbReference>
<dbReference type="RefSeq" id="WP_000626187.1">
    <property type="nucleotide sequence ID" value="NZ_CP028304.1"/>
</dbReference>
<dbReference type="SMR" id="B7L5X4"/>
<dbReference type="GeneID" id="93778499"/>
<dbReference type="KEGG" id="eck:EC55989_3932"/>
<dbReference type="HOGENOM" id="CLU_151816_0_0_6"/>
<dbReference type="Proteomes" id="UP000000746">
    <property type="component" value="Chromosome"/>
</dbReference>
<dbReference type="GO" id="GO:0005886">
    <property type="term" value="C:plasma membrane"/>
    <property type="evidence" value="ECO:0007669"/>
    <property type="project" value="UniProtKB-SubCell"/>
</dbReference>
<dbReference type="HAMAP" id="MF_01088">
    <property type="entry name" value="UspB"/>
    <property type="match status" value="1"/>
</dbReference>
<dbReference type="InterPro" id="IPR019598">
    <property type="entry name" value="Universal_stress_protein_B"/>
</dbReference>
<dbReference type="NCBIfam" id="NF003435">
    <property type="entry name" value="PRK04960.1"/>
    <property type="match status" value="1"/>
</dbReference>
<dbReference type="Pfam" id="PF10625">
    <property type="entry name" value="UspB"/>
    <property type="match status" value="1"/>
</dbReference>
<organism>
    <name type="scientific">Escherichia coli (strain 55989 / EAEC)</name>
    <dbReference type="NCBI Taxonomy" id="585055"/>
    <lineage>
        <taxon>Bacteria</taxon>
        <taxon>Pseudomonadati</taxon>
        <taxon>Pseudomonadota</taxon>
        <taxon>Gammaproteobacteria</taxon>
        <taxon>Enterobacterales</taxon>
        <taxon>Enterobacteriaceae</taxon>
        <taxon>Escherichia</taxon>
    </lineage>
</organism>
<gene>
    <name evidence="1" type="primary">uspB</name>
    <name type="ordered locus">EC55989_3932</name>
</gene>